<sequence length="101" mass="11204">MIPGEYQIQDGEIELNAGRRTLTLNVANSGDRPIQVGSHYHFFETNDALVFDRALARGMRLNIPAGTAVRFEPGQSREVELVELAGLRRVYGFAGRVMGEL</sequence>
<accession>C1DNK5</accession>
<gene>
    <name evidence="1" type="primary">ureB</name>
    <name type="ordered locus">Avin_09890</name>
</gene>
<proteinExistence type="inferred from homology"/>
<evidence type="ECO:0000255" key="1">
    <source>
        <dbReference type="HAMAP-Rule" id="MF_01954"/>
    </source>
</evidence>
<comment type="catalytic activity">
    <reaction evidence="1">
        <text>urea + 2 H2O + H(+) = hydrogencarbonate + 2 NH4(+)</text>
        <dbReference type="Rhea" id="RHEA:20557"/>
        <dbReference type="ChEBI" id="CHEBI:15377"/>
        <dbReference type="ChEBI" id="CHEBI:15378"/>
        <dbReference type="ChEBI" id="CHEBI:16199"/>
        <dbReference type="ChEBI" id="CHEBI:17544"/>
        <dbReference type="ChEBI" id="CHEBI:28938"/>
        <dbReference type="EC" id="3.5.1.5"/>
    </reaction>
</comment>
<comment type="pathway">
    <text evidence="1">Nitrogen metabolism; urea degradation; CO(2) and NH(3) from urea (urease route): step 1/1.</text>
</comment>
<comment type="subunit">
    <text evidence="1">Heterotrimer of UreA (gamma), UreB (beta) and UreC (alpha) subunits. Three heterotrimers associate to form the active enzyme.</text>
</comment>
<comment type="subcellular location">
    <subcellularLocation>
        <location evidence="1">Cytoplasm</location>
    </subcellularLocation>
</comment>
<comment type="similarity">
    <text evidence="1">Belongs to the urease beta subunit family.</text>
</comment>
<name>URE2_AZOVD</name>
<keyword id="KW-0963">Cytoplasm</keyword>
<keyword id="KW-0378">Hydrolase</keyword>
<feature type="chain" id="PRO_1000216202" description="Urease subunit beta">
    <location>
        <begin position="1"/>
        <end position="101"/>
    </location>
</feature>
<dbReference type="EC" id="3.5.1.5" evidence="1"/>
<dbReference type="EMBL" id="CP001157">
    <property type="protein sequence ID" value="ACO77221.1"/>
    <property type="molecule type" value="Genomic_DNA"/>
</dbReference>
<dbReference type="RefSeq" id="WP_012699644.1">
    <property type="nucleotide sequence ID" value="NC_012560.1"/>
</dbReference>
<dbReference type="SMR" id="C1DNK5"/>
<dbReference type="STRING" id="322710.Avin_09890"/>
<dbReference type="EnsemblBacteria" id="ACO77221">
    <property type="protein sequence ID" value="ACO77221"/>
    <property type="gene ID" value="Avin_09890"/>
</dbReference>
<dbReference type="GeneID" id="88184338"/>
<dbReference type="KEGG" id="avn:Avin_09890"/>
<dbReference type="eggNOG" id="COG0832">
    <property type="taxonomic scope" value="Bacteria"/>
</dbReference>
<dbReference type="HOGENOM" id="CLU_129707_1_1_6"/>
<dbReference type="OrthoDB" id="9797217at2"/>
<dbReference type="UniPathway" id="UPA00258">
    <property type="reaction ID" value="UER00370"/>
</dbReference>
<dbReference type="Proteomes" id="UP000002424">
    <property type="component" value="Chromosome"/>
</dbReference>
<dbReference type="GO" id="GO:0035550">
    <property type="term" value="C:urease complex"/>
    <property type="evidence" value="ECO:0007669"/>
    <property type="project" value="InterPro"/>
</dbReference>
<dbReference type="GO" id="GO:0009039">
    <property type="term" value="F:urease activity"/>
    <property type="evidence" value="ECO:0007669"/>
    <property type="project" value="UniProtKB-UniRule"/>
</dbReference>
<dbReference type="GO" id="GO:0043419">
    <property type="term" value="P:urea catabolic process"/>
    <property type="evidence" value="ECO:0007669"/>
    <property type="project" value="UniProtKB-UniRule"/>
</dbReference>
<dbReference type="CDD" id="cd00407">
    <property type="entry name" value="Urease_beta"/>
    <property type="match status" value="1"/>
</dbReference>
<dbReference type="FunFam" id="2.10.150.10:FF:000001">
    <property type="entry name" value="Urease subunit beta"/>
    <property type="match status" value="1"/>
</dbReference>
<dbReference type="Gene3D" id="2.10.150.10">
    <property type="entry name" value="Urease, beta subunit"/>
    <property type="match status" value="1"/>
</dbReference>
<dbReference type="HAMAP" id="MF_01954">
    <property type="entry name" value="Urease_beta"/>
    <property type="match status" value="1"/>
</dbReference>
<dbReference type="InterPro" id="IPR002019">
    <property type="entry name" value="Urease_beta-like"/>
</dbReference>
<dbReference type="InterPro" id="IPR036461">
    <property type="entry name" value="Urease_betasu_sf"/>
</dbReference>
<dbReference type="InterPro" id="IPR050069">
    <property type="entry name" value="Urease_subunit"/>
</dbReference>
<dbReference type="NCBIfam" id="NF009682">
    <property type="entry name" value="PRK13203.1"/>
    <property type="match status" value="1"/>
</dbReference>
<dbReference type="NCBIfam" id="TIGR00192">
    <property type="entry name" value="urease_beta"/>
    <property type="match status" value="1"/>
</dbReference>
<dbReference type="PANTHER" id="PTHR33569">
    <property type="entry name" value="UREASE"/>
    <property type="match status" value="1"/>
</dbReference>
<dbReference type="PANTHER" id="PTHR33569:SF1">
    <property type="entry name" value="UREASE"/>
    <property type="match status" value="1"/>
</dbReference>
<dbReference type="Pfam" id="PF00699">
    <property type="entry name" value="Urease_beta"/>
    <property type="match status" value="1"/>
</dbReference>
<dbReference type="SUPFAM" id="SSF51278">
    <property type="entry name" value="Urease, beta-subunit"/>
    <property type="match status" value="1"/>
</dbReference>
<protein>
    <recommendedName>
        <fullName evidence="1">Urease subunit beta</fullName>
        <ecNumber evidence="1">3.5.1.5</ecNumber>
    </recommendedName>
    <alternativeName>
        <fullName evidence="1">Urea amidohydrolase subunit beta</fullName>
    </alternativeName>
</protein>
<reference key="1">
    <citation type="journal article" date="2009" name="J. Bacteriol.">
        <title>Genome sequence of Azotobacter vinelandii, an obligate aerobe specialized to support diverse anaerobic metabolic processes.</title>
        <authorList>
            <person name="Setubal J.C."/>
            <person name="Dos Santos P."/>
            <person name="Goldman B.S."/>
            <person name="Ertesvaag H."/>
            <person name="Espin G."/>
            <person name="Rubio L.M."/>
            <person name="Valla S."/>
            <person name="Almeida N.F."/>
            <person name="Balasubramanian D."/>
            <person name="Cromes L."/>
            <person name="Curatti L."/>
            <person name="Du Z."/>
            <person name="Godsy E."/>
            <person name="Goodner B."/>
            <person name="Hellner-Burris K."/>
            <person name="Hernandez J.A."/>
            <person name="Houmiel K."/>
            <person name="Imperial J."/>
            <person name="Kennedy C."/>
            <person name="Larson T.J."/>
            <person name="Latreille P."/>
            <person name="Ligon L.S."/>
            <person name="Lu J."/>
            <person name="Maerk M."/>
            <person name="Miller N.M."/>
            <person name="Norton S."/>
            <person name="O'Carroll I.P."/>
            <person name="Paulsen I."/>
            <person name="Raulfs E.C."/>
            <person name="Roemer R."/>
            <person name="Rosser J."/>
            <person name="Segura D."/>
            <person name="Slater S."/>
            <person name="Stricklin S.L."/>
            <person name="Studholme D.J."/>
            <person name="Sun J."/>
            <person name="Viana C.J."/>
            <person name="Wallin E."/>
            <person name="Wang B."/>
            <person name="Wheeler C."/>
            <person name="Zhu H."/>
            <person name="Dean D.R."/>
            <person name="Dixon R."/>
            <person name="Wood D."/>
        </authorList>
    </citation>
    <scope>NUCLEOTIDE SEQUENCE [LARGE SCALE GENOMIC DNA]</scope>
    <source>
        <strain>DJ / ATCC BAA-1303</strain>
    </source>
</reference>
<organism>
    <name type="scientific">Azotobacter vinelandii (strain DJ / ATCC BAA-1303)</name>
    <dbReference type="NCBI Taxonomy" id="322710"/>
    <lineage>
        <taxon>Bacteria</taxon>
        <taxon>Pseudomonadati</taxon>
        <taxon>Pseudomonadota</taxon>
        <taxon>Gammaproteobacteria</taxon>
        <taxon>Pseudomonadales</taxon>
        <taxon>Pseudomonadaceae</taxon>
        <taxon>Azotobacter</taxon>
    </lineage>
</organism>